<sequence>MARVVALVLLGLLSLTGLEAVQRIPKVQVYSRHPAENGKPNFLNCYVSGFHPPEIEIDLLKNGEKMKVDRSDLSFSKDWSFYLLVHTDFTPNGVDEYSCRVQHSTLKEPLIVKWDRDL</sequence>
<gene>
    <name type="primary">B2M</name>
</gene>
<protein>
    <recommendedName>
        <fullName>Beta-2-microglobulin</fullName>
    </recommendedName>
</protein>
<keyword id="KW-1015">Disulfide bond</keyword>
<keyword id="KW-0391">Immunity</keyword>
<keyword id="KW-0393">Immunoglobulin domain</keyword>
<keyword id="KW-0490">MHC I</keyword>
<keyword id="KW-0964">Secreted</keyword>
<keyword id="KW-0732">Signal</keyword>
<feature type="signal peptide" evidence="2">
    <location>
        <begin position="1"/>
        <end position="20"/>
    </location>
</feature>
<feature type="chain" id="PRO_0000041822" description="Beta-2-microglobulin">
    <location>
        <begin position="21"/>
        <end position="118"/>
    </location>
</feature>
<feature type="domain" description="Ig-like C1-type">
    <location>
        <begin position="25"/>
        <end position="111"/>
    </location>
</feature>
<feature type="disulfide bond" evidence="3">
    <location>
        <begin position="45"/>
        <end position="99"/>
    </location>
</feature>
<comment type="function">
    <text evidence="1">Component of the class I major histocompatibility complex (MHC). Involved in the presentation of peptide antigens to the immune system (By similarity).</text>
</comment>
<comment type="subunit">
    <text evidence="1">Heterodimer of an alpha chain and a beta chain. Beta-2-microglobulin is the beta-chain of major histocompatibility complex class I molecules (By similarity).</text>
</comment>
<comment type="subcellular location">
    <subcellularLocation>
        <location evidence="1">Secreted</location>
    </subcellularLocation>
</comment>
<comment type="similarity">
    <text evidence="4">Belongs to the beta-2-microglobulin family.</text>
</comment>
<reference key="1">
    <citation type="journal article" date="2003" name="Immunogenetics">
        <title>Characterization of the beta(2)-microglobulin gene of the horse.</title>
        <authorList>
            <person name="Tallmadge R.L."/>
            <person name="Lear T.L."/>
            <person name="Johnson A.K."/>
            <person name="Guerin G."/>
            <person name="Millon L.V."/>
            <person name="Carpenter S.L."/>
            <person name="Antczak D.F."/>
        </authorList>
    </citation>
    <scope>NUCLEOTIDE SEQUENCE [GENOMIC DNA]</scope>
</reference>
<organism>
    <name type="scientific">Equus grevyi</name>
    <name type="common">Grevy's zebra</name>
    <dbReference type="NCBI Taxonomy" id="9792"/>
    <lineage>
        <taxon>Eukaryota</taxon>
        <taxon>Metazoa</taxon>
        <taxon>Chordata</taxon>
        <taxon>Craniata</taxon>
        <taxon>Vertebrata</taxon>
        <taxon>Euteleostomi</taxon>
        <taxon>Mammalia</taxon>
        <taxon>Eutheria</taxon>
        <taxon>Laurasiatheria</taxon>
        <taxon>Perissodactyla</taxon>
        <taxon>Equidae</taxon>
        <taxon>Equus</taxon>
    </lineage>
</organism>
<evidence type="ECO:0000250" key="1"/>
<evidence type="ECO:0000255" key="2"/>
<evidence type="ECO:0000255" key="3">
    <source>
        <dbReference type="PROSITE-ProRule" id="PRU00114"/>
    </source>
</evidence>
<evidence type="ECO:0000305" key="4"/>
<name>B2MG_EQUGR</name>
<proteinExistence type="inferred from homology"/>
<accession>Q863A9</accession>
<dbReference type="EMBL" id="AY124698">
    <property type="protein sequence ID" value="AAM77023.1"/>
    <property type="molecule type" value="Genomic_DNA"/>
</dbReference>
<dbReference type="EMBL" id="AY124696">
    <property type="protein sequence ID" value="AAM77023.1"/>
    <property type="status" value="JOINED"/>
    <property type="molecule type" value="Genomic_DNA"/>
</dbReference>
<dbReference type="EMBL" id="AY124697">
    <property type="protein sequence ID" value="AAM77023.1"/>
    <property type="status" value="JOINED"/>
    <property type="molecule type" value="Genomic_DNA"/>
</dbReference>
<dbReference type="SMR" id="Q863A9"/>
<dbReference type="GO" id="GO:0005576">
    <property type="term" value="C:extracellular region"/>
    <property type="evidence" value="ECO:0007669"/>
    <property type="project" value="UniProtKB-SubCell"/>
</dbReference>
<dbReference type="GO" id="GO:0042612">
    <property type="term" value="C:MHC class I protein complex"/>
    <property type="evidence" value="ECO:0007669"/>
    <property type="project" value="UniProtKB-KW"/>
</dbReference>
<dbReference type="GO" id="GO:0002474">
    <property type="term" value="P:antigen processing and presentation of peptide antigen via MHC class I"/>
    <property type="evidence" value="ECO:0007669"/>
    <property type="project" value="UniProtKB-KW"/>
</dbReference>
<dbReference type="GO" id="GO:0006955">
    <property type="term" value="P:immune response"/>
    <property type="evidence" value="ECO:0007669"/>
    <property type="project" value="InterPro"/>
</dbReference>
<dbReference type="CDD" id="cd05770">
    <property type="entry name" value="IgC1_beta2m"/>
    <property type="match status" value="1"/>
</dbReference>
<dbReference type="FunFam" id="2.60.40.10:FF:001005">
    <property type="entry name" value="Beta-2-microglobulin"/>
    <property type="match status" value="1"/>
</dbReference>
<dbReference type="Gene3D" id="2.60.40.10">
    <property type="entry name" value="Immunoglobulins"/>
    <property type="match status" value="1"/>
</dbReference>
<dbReference type="InterPro" id="IPR015707">
    <property type="entry name" value="B2Microglobulin"/>
</dbReference>
<dbReference type="InterPro" id="IPR007110">
    <property type="entry name" value="Ig-like_dom"/>
</dbReference>
<dbReference type="InterPro" id="IPR036179">
    <property type="entry name" value="Ig-like_dom_sf"/>
</dbReference>
<dbReference type="InterPro" id="IPR013783">
    <property type="entry name" value="Ig-like_fold"/>
</dbReference>
<dbReference type="InterPro" id="IPR003006">
    <property type="entry name" value="Ig/MHC_CS"/>
</dbReference>
<dbReference type="InterPro" id="IPR003597">
    <property type="entry name" value="Ig_C1-set"/>
</dbReference>
<dbReference type="InterPro" id="IPR050160">
    <property type="entry name" value="MHC/Immunoglobulin"/>
</dbReference>
<dbReference type="PANTHER" id="PTHR19944:SF62">
    <property type="entry name" value="BETA-2-MICROGLOBULIN"/>
    <property type="match status" value="1"/>
</dbReference>
<dbReference type="PANTHER" id="PTHR19944">
    <property type="entry name" value="MHC CLASS II-RELATED"/>
    <property type="match status" value="1"/>
</dbReference>
<dbReference type="Pfam" id="PF07654">
    <property type="entry name" value="C1-set"/>
    <property type="match status" value="1"/>
</dbReference>
<dbReference type="SMART" id="SM00407">
    <property type="entry name" value="IGc1"/>
    <property type="match status" value="1"/>
</dbReference>
<dbReference type="SUPFAM" id="SSF48726">
    <property type="entry name" value="Immunoglobulin"/>
    <property type="match status" value="1"/>
</dbReference>
<dbReference type="PROSITE" id="PS50835">
    <property type="entry name" value="IG_LIKE"/>
    <property type="match status" value="1"/>
</dbReference>
<dbReference type="PROSITE" id="PS00290">
    <property type="entry name" value="IG_MHC"/>
    <property type="match status" value="1"/>
</dbReference>